<keyword id="KW-0067">ATP-binding</keyword>
<keyword id="KW-0436">Ligase</keyword>
<keyword id="KW-0547">Nucleotide-binding</keyword>
<keyword id="KW-0648">Protein biosynthesis</keyword>
<name>GATA_ACIBT</name>
<evidence type="ECO:0000255" key="1">
    <source>
        <dbReference type="HAMAP-Rule" id="MF_00120"/>
    </source>
</evidence>
<proteinExistence type="inferred from homology"/>
<protein>
    <recommendedName>
        <fullName evidence="1">Glutamyl-tRNA(Gln) amidotransferase subunit A</fullName>
        <shortName evidence="1">Glu-ADT subunit A</shortName>
        <ecNumber evidence="1">6.3.5.7</ecNumber>
    </recommendedName>
</protein>
<reference key="1">
    <citation type="journal article" date="2007" name="Genes Dev.">
        <title>New insights into Acinetobacter baumannii pathogenesis revealed by high-density pyrosequencing and transposon mutagenesis.</title>
        <authorList>
            <person name="Smith M.G."/>
            <person name="Gianoulis T.A."/>
            <person name="Pukatzki S."/>
            <person name="Mekalanos J.J."/>
            <person name="Ornston L.N."/>
            <person name="Gerstein M."/>
            <person name="Snyder M."/>
        </authorList>
    </citation>
    <scope>NUCLEOTIDE SEQUENCE [LARGE SCALE GENOMIC DNA]</scope>
    <source>
        <strain>ATCC 17978 / DSM 105126 / CIP 53.77 / LMG 1025 / NCDC KC755 / 5377</strain>
    </source>
</reference>
<gene>
    <name evidence="1" type="primary">gatA</name>
    <name type="ordered locus">A1S_2783</name>
</gene>
<dbReference type="EC" id="6.3.5.7" evidence="1"/>
<dbReference type="EMBL" id="CP000521">
    <property type="protein sequence ID" value="ABO13195.2"/>
    <property type="molecule type" value="Genomic_DNA"/>
</dbReference>
<dbReference type="RefSeq" id="WP_000130670.1">
    <property type="nucleotide sequence ID" value="NZ_CACVBA010000001.1"/>
</dbReference>
<dbReference type="SMR" id="A3M8F1"/>
<dbReference type="KEGG" id="acb:A1S_2783"/>
<dbReference type="HOGENOM" id="CLU_009600_0_3_6"/>
<dbReference type="GO" id="GO:0030956">
    <property type="term" value="C:glutamyl-tRNA(Gln) amidotransferase complex"/>
    <property type="evidence" value="ECO:0007669"/>
    <property type="project" value="InterPro"/>
</dbReference>
<dbReference type="GO" id="GO:0005524">
    <property type="term" value="F:ATP binding"/>
    <property type="evidence" value="ECO:0007669"/>
    <property type="project" value="UniProtKB-KW"/>
</dbReference>
<dbReference type="GO" id="GO:0050567">
    <property type="term" value="F:glutaminyl-tRNA synthase (glutamine-hydrolyzing) activity"/>
    <property type="evidence" value="ECO:0007669"/>
    <property type="project" value="UniProtKB-UniRule"/>
</dbReference>
<dbReference type="GO" id="GO:0006412">
    <property type="term" value="P:translation"/>
    <property type="evidence" value="ECO:0007669"/>
    <property type="project" value="UniProtKB-UniRule"/>
</dbReference>
<dbReference type="Gene3D" id="3.90.1300.10">
    <property type="entry name" value="Amidase signature (AS) domain"/>
    <property type="match status" value="1"/>
</dbReference>
<dbReference type="HAMAP" id="MF_00120">
    <property type="entry name" value="GatA"/>
    <property type="match status" value="1"/>
</dbReference>
<dbReference type="InterPro" id="IPR000120">
    <property type="entry name" value="Amidase"/>
</dbReference>
<dbReference type="InterPro" id="IPR020556">
    <property type="entry name" value="Amidase_CS"/>
</dbReference>
<dbReference type="InterPro" id="IPR023631">
    <property type="entry name" value="Amidase_dom"/>
</dbReference>
<dbReference type="InterPro" id="IPR036928">
    <property type="entry name" value="AS_sf"/>
</dbReference>
<dbReference type="InterPro" id="IPR004412">
    <property type="entry name" value="GatA"/>
</dbReference>
<dbReference type="NCBIfam" id="TIGR00132">
    <property type="entry name" value="gatA"/>
    <property type="match status" value="1"/>
</dbReference>
<dbReference type="PANTHER" id="PTHR11895:SF151">
    <property type="entry name" value="GLUTAMYL-TRNA(GLN) AMIDOTRANSFERASE SUBUNIT A"/>
    <property type="match status" value="1"/>
</dbReference>
<dbReference type="PANTHER" id="PTHR11895">
    <property type="entry name" value="TRANSAMIDASE"/>
    <property type="match status" value="1"/>
</dbReference>
<dbReference type="Pfam" id="PF01425">
    <property type="entry name" value="Amidase"/>
    <property type="match status" value="1"/>
</dbReference>
<dbReference type="SUPFAM" id="SSF75304">
    <property type="entry name" value="Amidase signature (AS) enzymes"/>
    <property type="match status" value="1"/>
</dbReference>
<dbReference type="PROSITE" id="PS00571">
    <property type="entry name" value="AMIDASES"/>
    <property type="match status" value="1"/>
</dbReference>
<sequence length="492" mass="52989">MTDLHRLSIRELAEGLSQAKFSSRELTEHYLKRIAKIDPQVKSYVTVTSEQALREADAADAALKAGNATALTGIPLAHKDIFCTKGIKTTAGSKMLDNFISPYDATVVEKTKAAGLVTLGKVNMDEFAMGSTSESSYVGATSNPWALDHVPGGSSGGSAAAVAADLAPFATGTDTGGSIRQPASFCGLTGLKPTYGRVSRFGIIAYASSLDQAGPMARSAEDCAYLMNVIAGHDAKDSTSVKKEVDDYVANLNGTSVKGLRIGIPKQYFNVAGLDADVKARVEESLKKLEEMGATLVEIDLNMTEAYVPTYYLIAPAEASSNLSRYDGVRYGYRCENPADLMDLYKRSRSEGFGPEIQRRILIGTYALSAGYYDAYYVKAQKVRRLIQQDFLKAFENVDVIAAPAAPTTAYKIGASLDPVEMYLGDIYTIAVNLAGLPAINAPVGFDKDNLPVGLQLIGNYWSESQLLSIVHQYQQNTDWHTKRAAIAEENA</sequence>
<comment type="function">
    <text evidence="1">Allows the formation of correctly charged Gln-tRNA(Gln) through the transamidation of misacylated Glu-tRNA(Gln) in organisms which lack glutaminyl-tRNA synthetase. The reaction takes place in the presence of glutamine and ATP through an activated gamma-phospho-Glu-tRNA(Gln).</text>
</comment>
<comment type="catalytic activity">
    <reaction evidence="1">
        <text>L-glutamyl-tRNA(Gln) + L-glutamine + ATP + H2O = L-glutaminyl-tRNA(Gln) + L-glutamate + ADP + phosphate + H(+)</text>
        <dbReference type="Rhea" id="RHEA:17521"/>
        <dbReference type="Rhea" id="RHEA-COMP:9681"/>
        <dbReference type="Rhea" id="RHEA-COMP:9684"/>
        <dbReference type="ChEBI" id="CHEBI:15377"/>
        <dbReference type="ChEBI" id="CHEBI:15378"/>
        <dbReference type="ChEBI" id="CHEBI:29985"/>
        <dbReference type="ChEBI" id="CHEBI:30616"/>
        <dbReference type="ChEBI" id="CHEBI:43474"/>
        <dbReference type="ChEBI" id="CHEBI:58359"/>
        <dbReference type="ChEBI" id="CHEBI:78520"/>
        <dbReference type="ChEBI" id="CHEBI:78521"/>
        <dbReference type="ChEBI" id="CHEBI:456216"/>
        <dbReference type="EC" id="6.3.5.7"/>
    </reaction>
</comment>
<comment type="subunit">
    <text evidence="1">Heterotrimer of A, B and C subunits.</text>
</comment>
<comment type="similarity">
    <text evidence="1">Belongs to the amidase family. GatA subfamily.</text>
</comment>
<accession>A3M8F1</accession>
<feature type="chain" id="PRO_1000095102" description="Glutamyl-tRNA(Gln) amidotransferase subunit A">
    <location>
        <begin position="1"/>
        <end position="492"/>
    </location>
</feature>
<feature type="active site" description="Charge relay system" evidence="1">
    <location>
        <position position="79"/>
    </location>
</feature>
<feature type="active site" description="Charge relay system" evidence="1">
    <location>
        <position position="154"/>
    </location>
</feature>
<feature type="active site" description="Acyl-ester intermediate" evidence="1">
    <location>
        <position position="178"/>
    </location>
</feature>
<organism>
    <name type="scientific">Acinetobacter baumannii (strain ATCC 17978 / DSM 105126 / CIP 53.77 / LMG 1025 / NCDC KC755 / 5377)</name>
    <dbReference type="NCBI Taxonomy" id="400667"/>
    <lineage>
        <taxon>Bacteria</taxon>
        <taxon>Pseudomonadati</taxon>
        <taxon>Pseudomonadota</taxon>
        <taxon>Gammaproteobacteria</taxon>
        <taxon>Moraxellales</taxon>
        <taxon>Moraxellaceae</taxon>
        <taxon>Acinetobacter</taxon>
        <taxon>Acinetobacter calcoaceticus/baumannii complex</taxon>
    </lineage>
</organism>